<evidence type="ECO:0000255" key="1">
    <source>
        <dbReference type="HAMAP-Rule" id="MF_01849"/>
    </source>
</evidence>
<evidence type="ECO:0000255" key="2">
    <source>
        <dbReference type="PROSITE-ProRule" id="PRU01266"/>
    </source>
</evidence>
<sequence length="340" mass="39410">MKNILDLKYEELVNEFQRIGLEKYRVDQVLNWIYKKKVFEFEKMTNLSKEHRKLLSEKFFIDLPKLLDMQISKIDKTTKFLWELRDGNTIESVALFHSGRVTACISTQVGCPVKCEFCATGQSGFVRNLTVGEIVSQILAIELNRKIKVGNVVYMGMGEPLLNFENVIDSIKMLNDKKMLNIGIRRITVSTVGIPEKIIALAESGLNVKLALSLHAVTDYKRDQIIPLNKKYSVEELIYSLRKYQEITGNRVTIEYILIREFNDYPEDAIRLVELLRGLSVYVNLIPINPVNPKFHRPNRWALERFKEILEKNGIECEIRKEKGTDIDAACGQLRRRKLR</sequence>
<reference key="1">
    <citation type="submission" date="2007-05" db="EMBL/GenBank/DDBJ databases">
        <title>Complete sequence of Thermosipho melanesiensis BI429.</title>
        <authorList>
            <consortium name="US DOE Joint Genome Institute"/>
            <person name="Copeland A."/>
            <person name="Lucas S."/>
            <person name="Lapidus A."/>
            <person name="Barry K."/>
            <person name="Glavina del Rio T."/>
            <person name="Dalin E."/>
            <person name="Tice H."/>
            <person name="Pitluck S."/>
            <person name="Chertkov O."/>
            <person name="Brettin T."/>
            <person name="Bruce D."/>
            <person name="Detter J.C."/>
            <person name="Han C."/>
            <person name="Schmutz J."/>
            <person name="Larimer F."/>
            <person name="Land M."/>
            <person name="Hauser L."/>
            <person name="Kyrpides N."/>
            <person name="Mikhailova N."/>
            <person name="Nelson K."/>
            <person name="Gogarten J.P."/>
            <person name="Noll K."/>
            <person name="Richardson P."/>
        </authorList>
    </citation>
    <scope>NUCLEOTIDE SEQUENCE [LARGE SCALE GENOMIC DNA]</scope>
    <source>
        <strain>DSM 12029 / CIP 104789 / BI429</strain>
    </source>
</reference>
<name>RLMN_THEM4</name>
<feature type="chain" id="PRO_0000350498" description="Probable dual-specificity RNA methyltransferase RlmN">
    <location>
        <begin position="1"/>
        <end position="340"/>
    </location>
</feature>
<feature type="domain" description="Radical SAM core" evidence="2">
    <location>
        <begin position="97"/>
        <end position="326"/>
    </location>
</feature>
<feature type="active site" description="Proton acceptor" evidence="1">
    <location>
        <position position="91"/>
    </location>
</feature>
<feature type="active site" description="S-methylcysteine intermediate" evidence="1">
    <location>
        <position position="331"/>
    </location>
</feature>
<feature type="binding site" evidence="1">
    <location>
        <position position="111"/>
    </location>
    <ligand>
        <name>[4Fe-4S] cluster</name>
        <dbReference type="ChEBI" id="CHEBI:49883"/>
        <note>4Fe-4S-S-AdoMet</note>
    </ligand>
</feature>
<feature type="binding site" evidence="1">
    <location>
        <position position="115"/>
    </location>
    <ligand>
        <name>[4Fe-4S] cluster</name>
        <dbReference type="ChEBI" id="CHEBI:49883"/>
        <note>4Fe-4S-S-AdoMet</note>
    </ligand>
</feature>
<feature type="binding site" evidence="1">
    <location>
        <position position="118"/>
    </location>
    <ligand>
        <name>[4Fe-4S] cluster</name>
        <dbReference type="ChEBI" id="CHEBI:49883"/>
        <note>4Fe-4S-S-AdoMet</note>
    </ligand>
</feature>
<feature type="binding site" evidence="1">
    <location>
        <begin position="158"/>
        <end position="159"/>
    </location>
    <ligand>
        <name>S-adenosyl-L-methionine</name>
        <dbReference type="ChEBI" id="CHEBI:59789"/>
    </ligand>
</feature>
<feature type="binding site" evidence="1">
    <location>
        <position position="190"/>
    </location>
    <ligand>
        <name>S-adenosyl-L-methionine</name>
        <dbReference type="ChEBI" id="CHEBI:59789"/>
    </ligand>
</feature>
<feature type="binding site" evidence="1">
    <location>
        <begin position="213"/>
        <end position="215"/>
    </location>
    <ligand>
        <name>S-adenosyl-L-methionine</name>
        <dbReference type="ChEBI" id="CHEBI:59789"/>
    </ligand>
</feature>
<feature type="binding site" evidence="1">
    <location>
        <position position="289"/>
    </location>
    <ligand>
        <name>S-adenosyl-L-methionine</name>
        <dbReference type="ChEBI" id="CHEBI:59789"/>
    </ligand>
</feature>
<feature type="disulfide bond" description="(transient)" evidence="1">
    <location>
        <begin position="104"/>
        <end position="331"/>
    </location>
</feature>
<gene>
    <name evidence="1" type="primary">rlmN</name>
    <name type="ordered locus">Tmel_1503</name>
</gene>
<comment type="function">
    <text evidence="1">Specifically methylates position 2 of adenine 2503 in 23S rRNA and position 2 of adenine 37 in tRNAs.</text>
</comment>
<comment type="catalytic activity">
    <reaction evidence="1">
        <text>adenosine(2503) in 23S rRNA + 2 reduced [2Fe-2S]-[ferredoxin] + 2 S-adenosyl-L-methionine = 2-methyladenosine(2503) in 23S rRNA + 5'-deoxyadenosine + L-methionine + 2 oxidized [2Fe-2S]-[ferredoxin] + S-adenosyl-L-homocysteine</text>
        <dbReference type="Rhea" id="RHEA:42916"/>
        <dbReference type="Rhea" id="RHEA-COMP:10000"/>
        <dbReference type="Rhea" id="RHEA-COMP:10001"/>
        <dbReference type="Rhea" id="RHEA-COMP:10152"/>
        <dbReference type="Rhea" id="RHEA-COMP:10282"/>
        <dbReference type="ChEBI" id="CHEBI:17319"/>
        <dbReference type="ChEBI" id="CHEBI:33737"/>
        <dbReference type="ChEBI" id="CHEBI:33738"/>
        <dbReference type="ChEBI" id="CHEBI:57844"/>
        <dbReference type="ChEBI" id="CHEBI:57856"/>
        <dbReference type="ChEBI" id="CHEBI:59789"/>
        <dbReference type="ChEBI" id="CHEBI:74411"/>
        <dbReference type="ChEBI" id="CHEBI:74497"/>
        <dbReference type="EC" id="2.1.1.192"/>
    </reaction>
</comment>
<comment type="catalytic activity">
    <reaction evidence="1">
        <text>adenosine(37) in tRNA + 2 reduced [2Fe-2S]-[ferredoxin] + 2 S-adenosyl-L-methionine = 2-methyladenosine(37) in tRNA + 5'-deoxyadenosine + L-methionine + 2 oxidized [2Fe-2S]-[ferredoxin] + S-adenosyl-L-homocysteine</text>
        <dbReference type="Rhea" id="RHEA:43332"/>
        <dbReference type="Rhea" id="RHEA-COMP:10000"/>
        <dbReference type="Rhea" id="RHEA-COMP:10001"/>
        <dbReference type="Rhea" id="RHEA-COMP:10162"/>
        <dbReference type="Rhea" id="RHEA-COMP:10485"/>
        <dbReference type="ChEBI" id="CHEBI:17319"/>
        <dbReference type="ChEBI" id="CHEBI:33737"/>
        <dbReference type="ChEBI" id="CHEBI:33738"/>
        <dbReference type="ChEBI" id="CHEBI:57844"/>
        <dbReference type="ChEBI" id="CHEBI:57856"/>
        <dbReference type="ChEBI" id="CHEBI:59789"/>
        <dbReference type="ChEBI" id="CHEBI:74411"/>
        <dbReference type="ChEBI" id="CHEBI:74497"/>
        <dbReference type="EC" id="2.1.1.192"/>
    </reaction>
</comment>
<comment type="cofactor">
    <cofactor evidence="1">
        <name>[4Fe-4S] cluster</name>
        <dbReference type="ChEBI" id="CHEBI:49883"/>
    </cofactor>
    <text evidence="1">Binds 1 [4Fe-4S] cluster. The cluster is coordinated with 3 cysteines and an exchangeable S-adenosyl-L-methionine.</text>
</comment>
<comment type="subcellular location">
    <subcellularLocation>
        <location evidence="1">Cytoplasm</location>
    </subcellularLocation>
</comment>
<comment type="miscellaneous">
    <text evidence="1">Reaction proceeds by a ping-pong mechanism involving intermediate methylation of a conserved cysteine residue.</text>
</comment>
<comment type="similarity">
    <text evidence="1">Belongs to the radical SAM superfamily. RlmN family.</text>
</comment>
<proteinExistence type="inferred from homology"/>
<dbReference type="EC" id="2.1.1.192" evidence="1"/>
<dbReference type="EMBL" id="CP000716">
    <property type="protein sequence ID" value="ABR31348.1"/>
    <property type="molecule type" value="Genomic_DNA"/>
</dbReference>
<dbReference type="RefSeq" id="WP_012057707.1">
    <property type="nucleotide sequence ID" value="NC_009616.1"/>
</dbReference>
<dbReference type="SMR" id="A6LN47"/>
<dbReference type="STRING" id="391009.Tmel_1503"/>
<dbReference type="KEGG" id="tme:Tmel_1503"/>
<dbReference type="eggNOG" id="COG0820">
    <property type="taxonomic scope" value="Bacteria"/>
</dbReference>
<dbReference type="HOGENOM" id="CLU_029101_2_0_0"/>
<dbReference type="OrthoDB" id="9793973at2"/>
<dbReference type="Proteomes" id="UP000001110">
    <property type="component" value="Chromosome"/>
</dbReference>
<dbReference type="GO" id="GO:0005737">
    <property type="term" value="C:cytoplasm"/>
    <property type="evidence" value="ECO:0007669"/>
    <property type="project" value="UniProtKB-SubCell"/>
</dbReference>
<dbReference type="GO" id="GO:0051539">
    <property type="term" value="F:4 iron, 4 sulfur cluster binding"/>
    <property type="evidence" value="ECO:0007669"/>
    <property type="project" value="UniProtKB-UniRule"/>
</dbReference>
<dbReference type="GO" id="GO:0046872">
    <property type="term" value="F:metal ion binding"/>
    <property type="evidence" value="ECO:0007669"/>
    <property type="project" value="UniProtKB-KW"/>
</dbReference>
<dbReference type="GO" id="GO:0070040">
    <property type="term" value="F:rRNA (adenine(2503)-C2-)-methyltransferase activity"/>
    <property type="evidence" value="ECO:0007669"/>
    <property type="project" value="UniProtKB-UniRule"/>
</dbReference>
<dbReference type="GO" id="GO:0019843">
    <property type="term" value="F:rRNA binding"/>
    <property type="evidence" value="ECO:0007669"/>
    <property type="project" value="UniProtKB-UniRule"/>
</dbReference>
<dbReference type="GO" id="GO:0002935">
    <property type="term" value="F:tRNA (adenine(37)-C2)-methyltransferase activity"/>
    <property type="evidence" value="ECO:0007669"/>
    <property type="project" value="UniProtKB-UniRule"/>
</dbReference>
<dbReference type="GO" id="GO:0000049">
    <property type="term" value="F:tRNA binding"/>
    <property type="evidence" value="ECO:0007669"/>
    <property type="project" value="UniProtKB-UniRule"/>
</dbReference>
<dbReference type="GO" id="GO:0070475">
    <property type="term" value="P:rRNA base methylation"/>
    <property type="evidence" value="ECO:0007669"/>
    <property type="project" value="UniProtKB-UniRule"/>
</dbReference>
<dbReference type="GO" id="GO:0030488">
    <property type="term" value="P:tRNA methylation"/>
    <property type="evidence" value="ECO:0007669"/>
    <property type="project" value="UniProtKB-UniRule"/>
</dbReference>
<dbReference type="CDD" id="cd01335">
    <property type="entry name" value="Radical_SAM"/>
    <property type="match status" value="1"/>
</dbReference>
<dbReference type="FunFam" id="3.20.20.70:FF:000014">
    <property type="entry name" value="Probable dual-specificity RNA methyltransferase RlmN"/>
    <property type="match status" value="1"/>
</dbReference>
<dbReference type="Gene3D" id="1.10.150.530">
    <property type="match status" value="1"/>
</dbReference>
<dbReference type="Gene3D" id="3.20.20.70">
    <property type="entry name" value="Aldolase class I"/>
    <property type="match status" value="1"/>
</dbReference>
<dbReference type="HAMAP" id="MF_01849">
    <property type="entry name" value="RNA_methyltr_RlmN"/>
    <property type="match status" value="1"/>
</dbReference>
<dbReference type="InterPro" id="IPR013785">
    <property type="entry name" value="Aldolase_TIM"/>
</dbReference>
<dbReference type="InterPro" id="IPR006638">
    <property type="entry name" value="Elp3/MiaA/NifB-like_rSAM"/>
</dbReference>
<dbReference type="InterPro" id="IPR040072">
    <property type="entry name" value="Methyltransferase_A"/>
</dbReference>
<dbReference type="InterPro" id="IPR048641">
    <property type="entry name" value="RlmN_N"/>
</dbReference>
<dbReference type="InterPro" id="IPR027492">
    <property type="entry name" value="RNA_MTrfase_RlmN"/>
</dbReference>
<dbReference type="InterPro" id="IPR004383">
    <property type="entry name" value="rRNA_lsu_MTrfase_RlmN/Cfr"/>
</dbReference>
<dbReference type="InterPro" id="IPR007197">
    <property type="entry name" value="rSAM"/>
</dbReference>
<dbReference type="NCBIfam" id="TIGR00048">
    <property type="entry name" value="rRNA_mod_RlmN"/>
    <property type="match status" value="1"/>
</dbReference>
<dbReference type="PANTHER" id="PTHR30544">
    <property type="entry name" value="23S RRNA METHYLTRANSFERASE"/>
    <property type="match status" value="1"/>
</dbReference>
<dbReference type="PANTHER" id="PTHR30544:SF5">
    <property type="entry name" value="RADICAL SAM CORE DOMAIN-CONTAINING PROTEIN"/>
    <property type="match status" value="1"/>
</dbReference>
<dbReference type="Pfam" id="PF04055">
    <property type="entry name" value="Radical_SAM"/>
    <property type="match status" value="1"/>
</dbReference>
<dbReference type="Pfam" id="PF21016">
    <property type="entry name" value="RlmN_N"/>
    <property type="match status" value="1"/>
</dbReference>
<dbReference type="PIRSF" id="PIRSF006004">
    <property type="entry name" value="CHP00048"/>
    <property type="match status" value="1"/>
</dbReference>
<dbReference type="SFLD" id="SFLDF00275">
    <property type="entry name" value="adenosine_C2_methyltransferase"/>
    <property type="match status" value="1"/>
</dbReference>
<dbReference type="SFLD" id="SFLDG01062">
    <property type="entry name" value="methyltransferase_(Class_A)"/>
    <property type="match status" value="1"/>
</dbReference>
<dbReference type="SMART" id="SM00729">
    <property type="entry name" value="Elp3"/>
    <property type="match status" value="1"/>
</dbReference>
<dbReference type="SUPFAM" id="SSF102114">
    <property type="entry name" value="Radical SAM enzymes"/>
    <property type="match status" value="1"/>
</dbReference>
<dbReference type="PROSITE" id="PS51918">
    <property type="entry name" value="RADICAL_SAM"/>
    <property type="match status" value="1"/>
</dbReference>
<keyword id="KW-0004">4Fe-4S</keyword>
<keyword id="KW-0963">Cytoplasm</keyword>
<keyword id="KW-1015">Disulfide bond</keyword>
<keyword id="KW-0408">Iron</keyword>
<keyword id="KW-0411">Iron-sulfur</keyword>
<keyword id="KW-0479">Metal-binding</keyword>
<keyword id="KW-0489">Methyltransferase</keyword>
<keyword id="KW-0698">rRNA processing</keyword>
<keyword id="KW-0949">S-adenosyl-L-methionine</keyword>
<keyword id="KW-0808">Transferase</keyword>
<keyword id="KW-0819">tRNA processing</keyword>
<accession>A6LN47</accession>
<organism>
    <name type="scientific">Thermosipho melanesiensis (strain DSM 12029 / CIP 104789 / BI429)</name>
    <dbReference type="NCBI Taxonomy" id="391009"/>
    <lineage>
        <taxon>Bacteria</taxon>
        <taxon>Thermotogati</taxon>
        <taxon>Thermotogota</taxon>
        <taxon>Thermotogae</taxon>
        <taxon>Thermotogales</taxon>
        <taxon>Fervidobacteriaceae</taxon>
        <taxon>Thermosipho</taxon>
    </lineage>
</organism>
<protein>
    <recommendedName>
        <fullName evidence="1">Probable dual-specificity RNA methyltransferase RlmN</fullName>
        <ecNumber evidence="1">2.1.1.192</ecNumber>
    </recommendedName>
    <alternativeName>
        <fullName evidence="1">23S rRNA (adenine(2503)-C(2))-methyltransferase</fullName>
    </alternativeName>
    <alternativeName>
        <fullName evidence="1">23S rRNA m2A2503 methyltransferase</fullName>
    </alternativeName>
    <alternativeName>
        <fullName evidence="1">Ribosomal RNA large subunit methyltransferase N</fullName>
    </alternativeName>
    <alternativeName>
        <fullName evidence="1">tRNA (adenine(37)-C(2))-methyltransferase</fullName>
    </alternativeName>
    <alternativeName>
        <fullName evidence="1">tRNA m2A37 methyltransferase</fullName>
    </alternativeName>
</protein>